<dbReference type="EMBL" id="Z54281">
    <property type="protein sequence ID" value="CAA91049.1"/>
    <property type="molecule type" value="Genomic_DNA"/>
</dbReference>
<dbReference type="PIR" id="T22304">
    <property type="entry name" value="T22304"/>
</dbReference>
<dbReference type="RefSeq" id="NP_001379088.1">
    <property type="nucleotide sequence ID" value="NM_001393140.1"/>
</dbReference>
<dbReference type="RefSeq" id="NP_495883.1">
    <property type="nucleotide sequence ID" value="NM_063482.1"/>
</dbReference>
<dbReference type="SMR" id="P52883"/>
<dbReference type="FunCoup" id="P52883">
    <property type="interactions" value="45"/>
</dbReference>
<dbReference type="PaxDb" id="6239-F46C5.7"/>
<dbReference type="EnsemblMetazoa" id="F46C5.7.1">
    <property type="protein sequence ID" value="F46C5.7.1"/>
    <property type="gene ID" value="WBGene00009782"/>
</dbReference>
<dbReference type="GeneID" id="185846"/>
<dbReference type="UCSC" id="F46C5.7">
    <property type="organism name" value="c. elegans"/>
</dbReference>
<dbReference type="AGR" id="WB:WBGene00009782"/>
<dbReference type="WormBase" id="F46C5.7">
    <property type="protein sequence ID" value="CE03348"/>
    <property type="gene ID" value="WBGene00009782"/>
</dbReference>
<dbReference type="eggNOG" id="ENOG502TG38">
    <property type="taxonomic scope" value="Eukaryota"/>
</dbReference>
<dbReference type="HOGENOM" id="CLU_085478_0_0_1"/>
<dbReference type="InParanoid" id="P52883"/>
<dbReference type="OMA" id="YYGCQVI"/>
<dbReference type="OrthoDB" id="5781746at2759"/>
<dbReference type="PRO" id="PR:P52883"/>
<dbReference type="Proteomes" id="UP000001940">
    <property type="component" value="Chromosome II"/>
</dbReference>
<dbReference type="Bgee" id="WBGene00009782">
    <property type="expression patterns" value="Expressed in larva and 1 other cell type or tissue"/>
</dbReference>
<dbReference type="GO" id="GO:0016020">
    <property type="term" value="C:membrane"/>
    <property type="evidence" value="ECO:0007669"/>
    <property type="project" value="UniProtKB-SubCell"/>
</dbReference>
<protein>
    <recommendedName>
        <fullName>Uncharacterized protein F46C5.7</fullName>
    </recommendedName>
</protein>
<evidence type="ECO:0000255" key="1"/>
<evidence type="ECO:0000305" key="2"/>
<comment type="subcellular location">
    <subcellularLocation>
        <location evidence="2">Membrane</location>
        <topology evidence="2">Multi-pass membrane protein</topology>
    </subcellularLocation>
</comment>
<name>YAF7_CAEEL</name>
<reference key="1">
    <citation type="journal article" date="1998" name="Science">
        <title>Genome sequence of the nematode C. elegans: a platform for investigating biology.</title>
        <authorList>
            <consortium name="The C. elegans sequencing consortium"/>
        </authorList>
    </citation>
    <scope>NUCLEOTIDE SEQUENCE [LARGE SCALE GENOMIC DNA]</scope>
    <source>
        <strain>Bristol N2</strain>
    </source>
</reference>
<gene>
    <name type="ORF">F46C5.7</name>
</gene>
<proteinExistence type="predicted"/>
<sequence>MSTTRMISDNERRFVDYLNSSFMPFWRRTAFVYKCELAFSILILFCAFAELIFYDCFVIFFLMIIASFVFVLLYLEFYFGSVYNCPALLHLHTLSAAFMSMVCWLSVLIPIFFGESIYIASRYVAHVIYKYYGCQVIFGSLLTTFAAASFARRKEIKSVELSHVDYLKRLMKLTSKVAEDVQKEAKSFELELLDIHSYS</sequence>
<organism>
    <name type="scientific">Caenorhabditis elegans</name>
    <dbReference type="NCBI Taxonomy" id="6239"/>
    <lineage>
        <taxon>Eukaryota</taxon>
        <taxon>Metazoa</taxon>
        <taxon>Ecdysozoa</taxon>
        <taxon>Nematoda</taxon>
        <taxon>Chromadorea</taxon>
        <taxon>Rhabditida</taxon>
        <taxon>Rhabditina</taxon>
        <taxon>Rhabditomorpha</taxon>
        <taxon>Rhabditoidea</taxon>
        <taxon>Rhabditidae</taxon>
        <taxon>Peloderinae</taxon>
        <taxon>Caenorhabditis</taxon>
    </lineage>
</organism>
<keyword id="KW-0472">Membrane</keyword>
<keyword id="KW-1185">Reference proteome</keyword>
<keyword id="KW-0812">Transmembrane</keyword>
<keyword id="KW-1133">Transmembrane helix</keyword>
<accession>P52883</accession>
<feature type="chain" id="PRO_0000065350" description="Uncharacterized protein F46C5.7">
    <location>
        <begin position="1"/>
        <end position="199"/>
    </location>
</feature>
<feature type="transmembrane region" description="Helical" evidence="1">
    <location>
        <begin position="35"/>
        <end position="55"/>
    </location>
</feature>
<feature type="transmembrane region" description="Helical" evidence="1">
    <location>
        <begin position="57"/>
        <end position="77"/>
    </location>
</feature>
<feature type="transmembrane region" description="Helical" evidence="1">
    <location>
        <begin position="94"/>
        <end position="114"/>
    </location>
</feature>
<feature type="transmembrane region" description="Helical" evidence="1">
    <location>
        <begin position="131"/>
        <end position="151"/>
    </location>
</feature>